<protein>
    <recommendedName>
        <fullName>Heat shock protein HSP.16.4</fullName>
    </recommendedName>
</protein>
<evidence type="ECO:0000255" key="1">
    <source>
        <dbReference type="PROSITE-ProRule" id="PRU00285"/>
    </source>
</evidence>
<evidence type="ECO:0000305" key="2"/>
<keyword id="KW-0963">Cytoplasm</keyword>
<keyword id="KW-0614">Plasmid</keyword>
<keyword id="KW-0346">Stress response</keyword>
<dbReference type="EMBL" id="AF019139">
    <property type="protein sequence ID" value="AAC27656.1"/>
    <property type="molecule type" value="Genomic_DNA"/>
</dbReference>
<dbReference type="PIR" id="T46832">
    <property type="entry name" value="T46832"/>
</dbReference>
<dbReference type="SMR" id="O30851"/>
<dbReference type="GO" id="GO:0005737">
    <property type="term" value="C:cytoplasm"/>
    <property type="evidence" value="ECO:0007669"/>
    <property type="project" value="UniProtKB-SubCell"/>
</dbReference>
<dbReference type="CDD" id="cd06471">
    <property type="entry name" value="ACD_LpsHSP_like"/>
    <property type="match status" value="1"/>
</dbReference>
<dbReference type="Gene3D" id="2.60.40.790">
    <property type="match status" value="1"/>
</dbReference>
<dbReference type="InterPro" id="IPR002068">
    <property type="entry name" value="A-crystallin/Hsp20_dom"/>
</dbReference>
<dbReference type="InterPro" id="IPR008978">
    <property type="entry name" value="HSP20-like_chaperone"/>
</dbReference>
<dbReference type="InterPro" id="IPR031107">
    <property type="entry name" value="Small_HSP"/>
</dbReference>
<dbReference type="PANTHER" id="PTHR11527">
    <property type="entry name" value="HEAT-SHOCK PROTEIN 20 FAMILY MEMBER"/>
    <property type="match status" value="1"/>
</dbReference>
<dbReference type="Pfam" id="PF00011">
    <property type="entry name" value="HSP20"/>
    <property type="match status" value="1"/>
</dbReference>
<dbReference type="SUPFAM" id="SSF49764">
    <property type="entry name" value="HSP20-like chaperones"/>
    <property type="match status" value="1"/>
</dbReference>
<dbReference type="PROSITE" id="PS01031">
    <property type="entry name" value="SHSP"/>
    <property type="match status" value="1"/>
</dbReference>
<accession>O30851</accession>
<feature type="chain" id="PRO_0000126058" description="Heat shock protein HSP.16.4">
    <location>
        <begin position="1"/>
        <end position="142"/>
    </location>
</feature>
<feature type="domain" description="sHSP" evidence="1">
    <location>
        <begin position="27"/>
        <end position="142"/>
    </location>
</feature>
<sequence>MLNKIQQRNSDIYSMTPFNFFEDFRRNLFNDLKSNLIKTDIHETDNEYVVEAELPGIPKEDIQVNYENGVLTISGQRQIDAAIEDEKGKLIHSERSLTSVRRQYLLENVKEDEIKASYSDGILKVTLPKDSNKEIKTSIPIE</sequence>
<proteinExistence type="inferred from homology"/>
<reference key="1">
    <citation type="journal article" date="1998" name="Plasmid">
        <title>Structural and functional properties of the hsp16.4-bearing plasmid pER341 in Streptococcus thermophilus.</title>
        <authorList>
            <person name="Somkuti G.A."/>
            <person name="Solaiman D.K.Y."/>
            <person name="Steinberg D.H."/>
        </authorList>
    </citation>
    <scope>NUCLEOTIDE SEQUENCE [GENOMIC DNA]</scope>
    <source>
        <strain>134</strain>
    </source>
</reference>
<name>ASP2_STRTR</name>
<geneLocation type="plasmid">
    <name>pER341</name>
</geneLocation>
<organism>
    <name type="scientific">Streptococcus thermophilus</name>
    <dbReference type="NCBI Taxonomy" id="1308"/>
    <lineage>
        <taxon>Bacteria</taxon>
        <taxon>Bacillati</taxon>
        <taxon>Bacillota</taxon>
        <taxon>Bacilli</taxon>
        <taxon>Lactobacillales</taxon>
        <taxon>Streptococcaceae</taxon>
        <taxon>Streptococcus</taxon>
    </lineage>
</organism>
<comment type="subcellular location">
    <subcellularLocation>
        <location evidence="2">Cytoplasm</location>
    </subcellularLocation>
</comment>
<comment type="similarity">
    <text evidence="1">Belongs to the small heat shock protein (HSP20) family.</text>
</comment>